<organism>
    <name type="scientific">Drosophila melanogaster</name>
    <name type="common">Fruit fly</name>
    <dbReference type="NCBI Taxonomy" id="7227"/>
    <lineage>
        <taxon>Eukaryota</taxon>
        <taxon>Metazoa</taxon>
        <taxon>Ecdysozoa</taxon>
        <taxon>Arthropoda</taxon>
        <taxon>Hexapoda</taxon>
        <taxon>Insecta</taxon>
        <taxon>Pterygota</taxon>
        <taxon>Neoptera</taxon>
        <taxon>Endopterygota</taxon>
        <taxon>Diptera</taxon>
        <taxon>Brachycera</taxon>
        <taxon>Muscomorpha</taxon>
        <taxon>Ephydroidea</taxon>
        <taxon>Drosophilidae</taxon>
        <taxon>Drosophila</taxon>
        <taxon>Sophophora</taxon>
    </lineage>
</organism>
<accession>Q9VI60</accession>
<gene>
    <name type="primary">e(y)2b</name>
    <name type="ORF">CG14612</name>
</gene>
<evidence type="ECO:0000269" key="1">
    <source>
    </source>
</evidence>
<evidence type="ECO:0000269" key="2">
    <source>
    </source>
</evidence>
<evidence type="ECO:0000305" key="3"/>
<name>ENY2B_DROME</name>
<keyword id="KW-1185">Reference proteome</keyword>
<feature type="chain" id="PRO_0000423833" description="Enhancer of yellow 2b transcription factor">
    <location>
        <begin position="1"/>
        <end position="95"/>
    </location>
</feature>
<proteinExistence type="evidence at protein level"/>
<reference key="1">
    <citation type="journal article" date="2000" name="Science">
        <title>The genome sequence of Drosophila melanogaster.</title>
        <authorList>
            <person name="Adams M.D."/>
            <person name="Celniker S.E."/>
            <person name="Holt R.A."/>
            <person name="Evans C.A."/>
            <person name="Gocayne J.D."/>
            <person name="Amanatides P.G."/>
            <person name="Scherer S.E."/>
            <person name="Li P.W."/>
            <person name="Hoskins R.A."/>
            <person name="Galle R.F."/>
            <person name="George R.A."/>
            <person name="Lewis S.E."/>
            <person name="Richards S."/>
            <person name="Ashburner M."/>
            <person name="Henderson S.N."/>
            <person name="Sutton G.G."/>
            <person name="Wortman J.R."/>
            <person name="Yandell M.D."/>
            <person name="Zhang Q."/>
            <person name="Chen L.X."/>
            <person name="Brandon R.C."/>
            <person name="Rogers Y.-H.C."/>
            <person name="Blazej R.G."/>
            <person name="Champe M."/>
            <person name="Pfeiffer B.D."/>
            <person name="Wan K.H."/>
            <person name="Doyle C."/>
            <person name="Baxter E.G."/>
            <person name="Helt G."/>
            <person name="Nelson C.R."/>
            <person name="Miklos G.L.G."/>
            <person name="Abril J.F."/>
            <person name="Agbayani A."/>
            <person name="An H.-J."/>
            <person name="Andrews-Pfannkoch C."/>
            <person name="Baldwin D."/>
            <person name="Ballew R.M."/>
            <person name="Basu A."/>
            <person name="Baxendale J."/>
            <person name="Bayraktaroglu L."/>
            <person name="Beasley E.M."/>
            <person name="Beeson K.Y."/>
            <person name="Benos P.V."/>
            <person name="Berman B.P."/>
            <person name="Bhandari D."/>
            <person name="Bolshakov S."/>
            <person name="Borkova D."/>
            <person name="Botchan M.R."/>
            <person name="Bouck J."/>
            <person name="Brokstein P."/>
            <person name="Brottier P."/>
            <person name="Burtis K.C."/>
            <person name="Busam D.A."/>
            <person name="Butler H."/>
            <person name="Cadieu E."/>
            <person name="Center A."/>
            <person name="Chandra I."/>
            <person name="Cherry J.M."/>
            <person name="Cawley S."/>
            <person name="Dahlke C."/>
            <person name="Davenport L.B."/>
            <person name="Davies P."/>
            <person name="de Pablos B."/>
            <person name="Delcher A."/>
            <person name="Deng Z."/>
            <person name="Mays A.D."/>
            <person name="Dew I."/>
            <person name="Dietz S.M."/>
            <person name="Dodson K."/>
            <person name="Doup L.E."/>
            <person name="Downes M."/>
            <person name="Dugan-Rocha S."/>
            <person name="Dunkov B.C."/>
            <person name="Dunn P."/>
            <person name="Durbin K.J."/>
            <person name="Evangelista C.C."/>
            <person name="Ferraz C."/>
            <person name="Ferriera S."/>
            <person name="Fleischmann W."/>
            <person name="Fosler C."/>
            <person name="Gabrielian A.E."/>
            <person name="Garg N.S."/>
            <person name="Gelbart W.M."/>
            <person name="Glasser K."/>
            <person name="Glodek A."/>
            <person name="Gong F."/>
            <person name="Gorrell J.H."/>
            <person name="Gu Z."/>
            <person name="Guan P."/>
            <person name="Harris M."/>
            <person name="Harris N.L."/>
            <person name="Harvey D.A."/>
            <person name="Heiman T.J."/>
            <person name="Hernandez J.R."/>
            <person name="Houck J."/>
            <person name="Hostin D."/>
            <person name="Houston K.A."/>
            <person name="Howland T.J."/>
            <person name="Wei M.-H."/>
            <person name="Ibegwam C."/>
            <person name="Jalali M."/>
            <person name="Kalush F."/>
            <person name="Karpen G.H."/>
            <person name="Ke Z."/>
            <person name="Kennison J.A."/>
            <person name="Ketchum K.A."/>
            <person name="Kimmel B.E."/>
            <person name="Kodira C.D."/>
            <person name="Kraft C.L."/>
            <person name="Kravitz S."/>
            <person name="Kulp D."/>
            <person name="Lai Z."/>
            <person name="Lasko P."/>
            <person name="Lei Y."/>
            <person name="Levitsky A.A."/>
            <person name="Li J.H."/>
            <person name="Li Z."/>
            <person name="Liang Y."/>
            <person name="Lin X."/>
            <person name="Liu X."/>
            <person name="Mattei B."/>
            <person name="McIntosh T.C."/>
            <person name="McLeod M.P."/>
            <person name="McPherson D."/>
            <person name="Merkulov G."/>
            <person name="Milshina N.V."/>
            <person name="Mobarry C."/>
            <person name="Morris J."/>
            <person name="Moshrefi A."/>
            <person name="Mount S.M."/>
            <person name="Moy M."/>
            <person name="Murphy B."/>
            <person name="Murphy L."/>
            <person name="Muzny D.M."/>
            <person name="Nelson D.L."/>
            <person name="Nelson D.R."/>
            <person name="Nelson K.A."/>
            <person name="Nixon K."/>
            <person name="Nusskern D.R."/>
            <person name="Pacleb J.M."/>
            <person name="Palazzolo M."/>
            <person name="Pittman G.S."/>
            <person name="Pan S."/>
            <person name="Pollard J."/>
            <person name="Puri V."/>
            <person name="Reese M.G."/>
            <person name="Reinert K."/>
            <person name="Remington K."/>
            <person name="Saunders R.D.C."/>
            <person name="Scheeler F."/>
            <person name="Shen H."/>
            <person name="Shue B.C."/>
            <person name="Siden-Kiamos I."/>
            <person name="Simpson M."/>
            <person name="Skupski M.P."/>
            <person name="Smith T.J."/>
            <person name="Spier E."/>
            <person name="Spradling A.C."/>
            <person name="Stapleton M."/>
            <person name="Strong R."/>
            <person name="Sun E."/>
            <person name="Svirskas R."/>
            <person name="Tector C."/>
            <person name="Turner R."/>
            <person name="Venter E."/>
            <person name="Wang A.H."/>
            <person name="Wang X."/>
            <person name="Wang Z.-Y."/>
            <person name="Wassarman D.A."/>
            <person name="Weinstock G.M."/>
            <person name="Weissenbach J."/>
            <person name="Williams S.M."/>
            <person name="Woodage T."/>
            <person name="Worley K.C."/>
            <person name="Wu D."/>
            <person name="Yang S."/>
            <person name="Yao Q.A."/>
            <person name="Ye J."/>
            <person name="Yeh R.-F."/>
            <person name="Zaveri J.S."/>
            <person name="Zhan M."/>
            <person name="Zhang G."/>
            <person name="Zhao Q."/>
            <person name="Zheng L."/>
            <person name="Zheng X.H."/>
            <person name="Zhong F.N."/>
            <person name="Zhong W."/>
            <person name="Zhou X."/>
            <person name="Zhu S.C."/>
            <person name="Zhu X."/>
            <person name="Smith H.O."/>
            <person name="Gibbs R.A."/>
            <person name="Myers E.W."/>
            <person name="Rubin G.M."/>
            <person name="Venter J.C."/>
        </authorList>
    </citation>
    <scope>NUCLEOTIDE SEQUENCE [LARGE SCALE GENOMIC DNA]</scope>
    <source>
        <strain>Berkeley</strain>
    </source>
</reference>
<reference key="2">
    <citation type="journal article" date="2002" name="Genome Biol.">
        <title>Annotation of the Drosophila melanogaster euchromatic genome: a systematic review.</title>
        <authorList>
            <person name="Misra S."/>
            <person name="Crosby M.A."/>
            <person name="Mungall C.J."/>
            <person name="Matthews B.B."/>
            <person name="Campbell K.S."/>
            <person name="Hradecky P."/>
            <person name="Huang Y."/>
            <person name="Kaminker J.S."/>
            <person name="Millburn G.H."/>
            <person name="Prochnik S.E."/>
            <person name="Smith C.D."/>
            <person name="Tupy J.L."/>
            <person name="Whitfield E.J."/>
            <person name="Bayraktaroglu L."/>
            <person name="Berman B.P."/>
            <person name="Bettencourt B.R."/>
            <person name="Celniker S.E."/>
            <person name="de Grey A.D.N.J."/>
            <person name="Drysdale R.A."/>
            <person name="Harris N.L."/>
            <person name="Richter J."/>
            <person name="Russo S."/>
            <person name="Schroeder A.J."/>
            <person name="Shu S.Q."/>
            <person name="Stapleton M."/>
            <person name="Yamada C."/>
            <person name="Ashburner M."/>
            <person name="Gelbart W.M."/>
            <person name="Rubin G.M."/>
            <person name="Lewis S.E."/>
        </authorList>
    </citation>
    <scope>GENOME REANNOTATION</scope>
    <source>
        <strain>Berkeley</strain>
    </source>
</reference>
<reference key="3">
    <citation type="journal article" date="2001" name="Mol. Cell. Biol.">
        <title>The novel transcription factor e(y)2 interacts with TAF(II)40 and potentiates transcription activation on chromatin templates.</title>
        <authorList>
            <person name="Georgieva S."/>
            <person name="Nabirochkina E."/>
            <person name="Dilworth F.J."/>
            <person name="Eickhoff H."/>
            <person name="Becker P."/>
            <person name="Tora L."/>
            <person name="Georgiev P."/>
            <person name="Soldatov A."/>
        </authorList>
    </citation>
    <scope>NUCLEOTIDE SEQUENCE [MRNA]</scope>
    <scope>FUNCTION</scope>
    <scope>SUBCELLULAR LOCATION</scope>
    <scope>TISSUE SPECIFICITY</scope>
    <scope>DEVELOPMENTAL STAGE</scope>
    <scope>INTERACTION WITH E(Y)1</scope>
</reference>
<reference key="4">
    <citation type="journal article" date="2005" name="Nucleic Acids Res.">
        <title>A retrocopy of a gene can functionally displace the source gene in evolution.</title>
        <authorList>
            <person name="Krasnov A.N."/>
            <person name="Kurshakova M.M."/>
            <person name="Ramensky V.E."/>
            <person name="Mardanov P.V."/>
            <person name="Nabirochkina E.N."/>
            <person name="Georgieva S.G."/>
        </authorList>
    </citation>
    <scope>FUNCTION</scope>
    <scope>TISSUE SPECIFICITY</scope>
</reference>
<sequence length="95" mass="10829">MTINKETGTDPDPGYKPTLRSQDKAALKELLHTRLVECGWHKDIKEMIRNIIMERGVDNINRDQLAAQIVPQARALVPEVVKNEMMLRVHAALDK</sequence>
<comment type="function">
    <text evidence="1 2">Testis-specific paralog of the ubiquitously expressed transcription and mRNA export factor e(y)2. Cannot functionally replace e(y)2.</text>
</comment>
<comment type="tissue specificity">
    <text evidence="1 2">Expressed specifically in testis.</text>
</comment>
<comment type="similarity">
    <text evidence="3">Belongs to the ENY2 family.</text>
</comment>
<dbReference type="EMBL" id="AE014297">
    <property type="protein sequence ID" value="AAF54066.1"/>
    <property type="molecule type" value="Genomic_DNA"/>
</dbReference>
<dbReference type="RefSeq" id="NP_001287204.1">
    <property type="nucleotide sequence ID" value="NM_001300275.1"/>
</dbReference>
<dbReference type="RefSeq" id="NP_652310.1">
    <property type="nucleotide sequence ID" value="NM_144053.2"/>
</dbReference>
<dbReference type="SMR" id="Q9VI60"/>
<dbReference type="BioGRID" id="72562">
    <property type="interactions" value="14"/>
</dbReference>
<dbReference type="FunCoup" id="Q9VI60">
    <property type="interactions" value="9"/>
</dbReference>
<dbReference type="IntAct" id="Q9VI60">
    <property type="interactions" value="7"/>
</dbReference>
<dbReference type="STRING" id="7227.FBpp0311218"/>
<dbReference type="PaxDb" id="7227-FBpp0081083"/>
<dbReference type="DNASU" id="50143"/>
<dbReference type="EnsemblMetazoa" id="FBtr0081562">
    <property type="protein sequence ID" value="FBpp0081083"/>
    <property type="gene ID" value="FBgn0040670"/>
</dbReference>
<dbReference type="EnsemblMetazoa" id="FBtr0344948">
    <property type="protein sequence ID" value="FBpp0311218"/>
    <property type="gene ID" value="FBgn0040670"/>
</dbReference>
<dbReference type="GeneID" id="50143"/>
<dbReference type="KEGG" id="dme:Dmel_CG14612"/>
<dbReference type="UCSC" id="CG14612-RA">
    <property type="organism name" value="d. melanogaster"/>
</dbReference>
<dbReference type="AGR" id="FB:FBgn0040670"/>
<dbReference type="CTD" id="50143"/>
<dbReference type="FlyBase" id="FBgn0040670">
    <property type="gene designation" value="e(y)2b"/>
</dbReference>
<dbReference type="VEuPathDB" id="VectorBase:FBgn0040670"/>
<dbReference type="eggNOG" id="KOG4479">
    <property type="taxonomic scope" value="Eukaryota"/>
</dbReference>
<dbReference type="HOGENOM" id="CLU_134052_1_3_1"/>
<dbReference type="InParanoid" id="Q9VI60"/>
<dbReference type="OMA" id="CGWRKDI"/>
<dbReference type="OrthoDB" id="6221744at2759"/>
<dbReference type="PhylomeDB" id="Q9VI60"/>
<dbReference type="SignaLink" id="Q9VI60"/>
<dbReference type="BioGRID-ORCS" id="50143">
    <property type="hits" value="0 hits in 1 CRISPR screen"/>
</dbReference>
<dbReference type="GenomeRNAi" id="50143"/>
<dbReference type="PRO" id="PR:Q9VI60"/>
<dbReference type="Proteomes" id="UP000000803">
    <property type="component" value="Chromosome 3R"/>
</dbReference>
<dbReference type="Bgee" id="FBgn0040670">
    <property type="expression patterns" value="Expressed in early elongation stage spermatid (Drosophila) in testis and 23 other cell types or tissues"/>
</dbReference>
<dbReference type="ExpressionAtlas" id="Q9VI60">
    <property type="expression patterns" value="baseline and differential"/>
</dbReference>
<dbReference type="GO" id="GO:0005737">
    <property type="term" value="C:cytoplasm"/>
    <property type="evidence" value="ECO:0007669"/>
    <property type="project" value="UniProtKB-UniRule"/>
</dbReference>
<dbReference type="GO" id="GO:0071819">
    <property type="term" value="C:DUBm complex"/>
    <property type="evidence" value="ECO:0000318"/>
    <property type="project" value="GO_Central"/>
</dbReference>
<dbReference type="GO" id="GO:0005643">
    <property type="term" value="C:nuclear pore"/>
    <property type="evidence" value="ECO:0007669"/>
    <property type="project" value="UniProtKB-UniRule"/>
</dbReference>
<dbReference type="GO" id="GO:0005634">
    <property type="term" value="C:nucleus"/>
    <property type="evidence" value="ECO:0000250"/>
    <property type="project" value="FlyBase"/>
</dbReference>
<dbReference type="GO" id="GO:0000124">
    <property type="term" value="C:SAGA complex"/>
    <property type="evidence" value="ECO:0000318"/>
    <property type="project" value="GO_Central"/>
</dbReference>
<dbReference type="GO" id="GO:0070390">
    <property type="term" value="C:transcription export complex 2"/>
    <property type="evidence" value="ECO:0007669"/>
    <property type="project" value="UniProtKB-UniRule"/>
</dbReference>
<dbReference type="GO" id="GO:0003682">
    <property type="term" value="F:chromatin binding"/>
    <property type="evidence" value="ECO:0000318"/>
    <property type="project" value="GO_Central"/>
</dbReference>
<dbReference type="GO" id="GO:0043035">
    <property type="term" value="F:chromatin insulator sequence binding"/>
    <property type="evidence" value="ECO:0007669"/>
    <property type="project" value="UniProtKB-UniRule"/>
</dbReference>
<dbReference type="GO" id="GO:0003713">
    <property type="term" value="F:transcription coactivator activity"/>
    <property type="evidence" value="ECO:0000318"/>
    <property type="project" value="GO_Central"/>
</dbReference>
<dbReference type="GO" id="GO:0016973">
    <property type="term" value="P:poly(A)+ mRNA export from nucleus"/>
    <property type="evidence" value="ECO:0000318"/>
    <property type="project" value="GO_Central"/>
</dbReference>
<dbReference type="GO" id="GO:0045944">
    <property type="term" value="P:positive regulation of transcription by RNA polymerase II"/>
    <property type="evidence" value="ECO:0000250"/>
    <property type="project" value="FlyBase"/>
</dbReference>
<dbReference type="GO" id="GO:0006357">
    <property type="term" value="P:regulation of transcription by RNA polymerase II"/>
    <property type="evidence" value="ECO:0000318"/>
    <property type="project" value="GO_Central"/>
</dbReference>
<dbReference type="GO" id="GO:0006368">
    <property type="term" value="P:transcription elongation by RNA polymerase II"/>
    <property type="evidence" value="ECO:0007669"/>
    <property type="project" value="UniProtKB-UniRule"/>
</dbReference>
<dbReference type="Gene3D" id="1.10.246.140">
    <property type="match status" value="1"/>
</dbReference>
<dbReference type="HAMAP" id="MF_03046">
    <property type="entry name" value="ENY2_Sus1"/>
    <property type="match status" value="1"/>
</dbReference>
<dbReference type="InterPro" id="IPR018783">
    <property type="entry name" value="TF_ENY2"/>
</dbReference>
<dbReference type="InterPro" id="IPR038212">
    <property type="entry name" value="TF_EnY2_sf"/>
</dbReference>
<dbReference type="PANTHER" id="PTHR12514">
    <property type="entry name" value="ENHANCER OF YELLOW 2 TRANSCRIPTION FACTOR"/>
    <property type="match status" value="1"/>
</dbReference>
<dbReference type="Pfam" id="PF10163">
    <property type="entry name" value="EnY2"/>
    <property type="match status" value="1"/>
</dbReference>
<protein>
    <recommendedName>
        <fullName>Enhancer of yellow 2b transcription factor</fullName>
    </recommendedName>
    <alternativeName>
        <fullName>Testis-specific e(y)2 paralog</fullName>
    </alternativeName>
</protein>